<dbReference type="EC" id="3.5.1.28"/>
<dbReference type="EMBL" id="CP000029">
    <property type="protein sequence ID" value="AAW53528.1"/>
    <property type="molecule type" value="Genomic_DNA"/>
</dbReference>
<dbReference type="SMR" id="Q5HRU2"/>
<dbReference type="STRING" id="176279.SERP0100"/>
<dbReference type="CAZy" id="CBM50">
    <property type="family name" value="Carbohydrate-Binding Module Family 50"/>
</dbReference>
<dbReference type="KEGG" id="ser:SERP0100"/>
<dbReference type="eggNOG" id="COG1388">
    <property type="taxonomic scope" value="Bacteria"/>
</dbReference>
<dbReference type="eggNOG" id="COG3942">
    <property type="taxonomic scope" value="Bacteria"/>
</dbReference>
<dbReference type="HOGENOM" id="CLU_016043_1_3_9"/>
<dbReference type="Proteomes" id="UP000000531">
    <property type="component" value="Chromosome"/>
</dbReference>
<dbReference type="GO" id="GO:0009986">
    <property type="term" value="C:cell surface"/>
    <property type="evidence" value="ECO:0007669"/>
    <property type="project" value="UniProtKB-SubCell"/>
</dbReference>
<dbReference type="GO" id="GO:0005576">
    <property type="term" value="C:extracellular region"/>
    <property type="evidence" value="ECO:0007669"/>
    <property type="project" value="UniProtKB-SubCell"/>
</dbReference>
<dbReference type="GO" id="GO:0008932">
    <property type="term" value="F:lytic endotransglycosylase activity"/>
    <property type="evidence" value="ECO:0007669"/>
    <property type="project" value="TreeGrafter"/>
</dbReference>
<dbReference type="GO" id="GO:0008745">
    <property type="term" value="F:N-acetylmuramoyl-L-alanine amidase activity"/>
    <property type="evidence" value="ECO:0007669"/>
    <property type="project" value="UniProtKB-EC"/>
</dbReference>
<dbReference type="GO" id="GO:0071555">
    <property type="term" value="P:cell wall organization"/>
    <property type="evidence" value="ECO:0007669"/>
    <property type="project" value="UniProtKB-KW"/>
</dbReference>
<dbReference type="GO" id="GO:0042742">
    <property type="term" value="P:defense response to bacterium"/>
    <property type="evidence" value="ECO:0007669"/>
    <property type="project" value="UniProtKB-KW"/>
</dbReference>
<dbReference type="GO" id="GO:0000917">
    <property type="term" value="P:division septum assembly"/>
    <property type="evidence" value="ECO:0007669"/>
    <property type="project" value="UniProtKB-KW"/>
</dbReference>
<dbReference type="GO" id="GO:0031640">
    <property type="term" value="P:killing of cells of another organism"/>
    <property type="evidence" value="ECO:0007669"/>
    <property type="project" value="UniProtKB-KW"/>
</dbReference>
<dbReference type="CDD" id="cd00118">
    <property type="entry name" value="LysM"/>
    <property type="match status" value="3"/>
</dbReference>
<dbReference type="Gene3D" id="3.90.1720.10">
    <property type="entry name" value="endopeptidase domain like (from Nostoc punctiforme)"/>
    <property type="match status" value="1"/>
</dbReference>
<dbReference type="Gene3D" id="3.10.350.10">
    <property type="entry name" value="LysM domain"/>
    <property type="match status" value="3"/>
</dbReference>
<dbReference type="InterPro" id="IPR007921">
    <property type="entry name" value="CHAP_dom"/>
</dbReference>
<dbReference type="InterPro" id="IPR018392">
    <property type="entry name" value="LysM_dom"/>
</dbReference>
<dbReference type="InterPro" id="IPR036779">
    <property type="entry name" value="LysM_dom_sf"/>
</dbReference>
<dbReference type="InterPro" id="IPR038765">
    <property type="entry name" value="Papain-like_cys_pep_sf"/>
</dbReference>
<dbReference type="PANTHER" id="PTHR33734">
    <property type="entry name" value="LYSM DOMAIN-CONTAINING GPI-ANCHORED PROTEIN 2"/>
    <property type="match status" value="1"/>
</dbReference>
<dbReference type="PANTHER" id="PTHR33734:SF22">
    <property type="entry name" value="MEMBRANE-BOUND LYTIC MUREIN TRANSGLYCOSYLASE D"/>
    <property type="match status" value="1"/>
</dbReference>
<dbReference type="Pfam" id="PF05257">
    <property type="entry name" value="CHAP"/>
    <property type="match status" value="1"/>
</dbReference>
<dbReference type="Pfam" id="PF01476">
    <property type="entry name" value="LysM"/>
    <property type="match status" value="3"/>
</dbReference>
<dbReference type="SMART" id="SM00257">
    <property type="entry name" value="LysM"/>
    <property type="match status" value="3"/>
</dbReference>
<dbReference type="SUPFAM" id="SSF54001">
    <property type="entry name" value="Cysteine proteinases"/>
    <property type="match status" value="1"/>
</dbReference>
<dbReference type="SUPFAM" id="SSF54106">
    <property type="entry name" value="LysM domain"/>
    <property type="match status" value="3"/>
</dbReference>
<dbReference type="PROSITE" id="PS50911">
    <property type="entry name" value="CHAP"/>
    <property type="match status" value="1"/>
</dbReference>
<dbReference type="PROSITE" id="PS51782">
    <property type="entry name" value="LYSM"/>
    <property type="match status" value="3"/>
</dbReference>
<organism>
    <name type="scientific">Staphylococcus epidermidis (strain ATCC 35984 / DSM 28319 / BCRC 17069 / CCUG 31568 / BM 3577 / RP62A)</name>
    <dbReference type="NCBI Taxonomy" id="176279"/>
    <lineage>
        <taxon>Bacteria</taxon>
        <taxon>Bacillati</taxon>
        <taxon>Bacillota</taxon>
        <taxon>Bacilli</taxon>
        <taxon>Bacillales</taxon>
        <taxon>Staphylococcaceae</taxon>
        <taxon>Staphylococcus</taxon>
    </lineage>
</organism>
<proteinExistence type="inferred from homology"/>
<evidence type="ECO:0000250" key="1"/>
<evidence type="ECO:0000255" key="2"/>
<evidence type="ECO:0000255" key="3">
    <source>
        <dbReference type="PROSITE-ProRule" id="PRU00048"/>
    </source>
</evidence>
<evidence type="ECO:0000255" key="4">
    <source>
        <dbReference type="PROSITE-ProRule" id="PRU01118"/>
    </source>
</evidence>
<comment type="function">
    <text evidence="1">Peptidoglycan hydrolase involved in the splitting of the septum during cell division.</text>
</comment>
<comment type="catalytic activity">
    <reaction>
        <text>Hydrolyzes the link between N-acetylmuramoyl residues and L-amino acid residues in certain cell-wall glycopeptides.</text>
        <dbReference type="EC" id="3.5.1.28"/>
    </reaction>
</comment>
<comment type="subcellular location">
    <subcellularLocation>
        <location evidence="1">Secreted</location>
    </subcellularLocation>
    <subcellularLocation>
        <location evidence="1">Cell surface</location>
    </subcellularLocation>
</comment>
<accession>Q5HRU2</accession>
<protein>
    <recommendedName>
        <fullName>N-acetylmuramoyl-L-alanine amidase sle1</fullName>
        <ecNumber>3.5.1.28</ecNumber>
    </recommendedName>
</protein>
<sequence length="324" mass="35075">MQKKYITAIIGTTALSALASTHAQAATTHTVKSGESVWSISHKYGISIAKLKSLNGLTSNLIFPNQVLKVSGSSSRATSTNSGTVYTVKAGDSLSSIAAKYGTTYQKIMQLNGLNNYLIFPGQKLKVSGKATSSSRAKASGSSGRTATYTVKYGDSLSAIASKYGTTYQKIMQLNGLTNFFIYPGQKLKVPGGSSSSSSSNNTRSNGGYYSPTFNHQNLYTWGQCTWHVFNRRAEIGKGISTYWWNANNWDNASAADGYTIDYRPTVGSIAQTDAGYYGHVAFVERVNSDGSILVSEMNWSAAPGNMTYRTIPAYQVRNYKFIH</sequence>
<feature type="signal peptide" evidence="2">
    <location>
        <begin position="1"/>
        <end position="25"/>
    </location>
</feature>
<feature type="chain" id="PRO_0000231627" description="N-acetylmuramoyl-L-alanine amidase sle1">
    <location>
        <begin position="26"/>
        <end position="324"/>
    </location>
</feature>
<feature type="domain" description="LysM 1" evidence="4">
    <location>
        <begin position="27"/>
        <end position="70"/>
    </location>
</feature>
<feature type="domain" description="LysM 2" evidence="4">
    <location>
        <begin position="84"/>
        <end position="127"/>
    </location>
</feature>
<feature type="domain" description="LysM 3" evidence="4">
    <location>
        <begin position="147"/>
        <end position="190"/>
    </location>
</feature>
<feature type="domain" description="Peptidase C51" evidence="3">
    <location>
        <begin position="200"/>
        <end position="324"/>
    </location>
</feature>
<name>SLE1_STAEQ</name>
<reference key="1">
    <citation type="journal article" date="2005" name="J. Bacteriol.">
        <title>Insights on evolution of virulence and resistance from the complete genome analysis of an early methicillin-resistant Staphylococcus aureus strain and a biofilm-producing methicillin-resistant Staphylococcus epidermidis strain.</title>
        <authorList>
            <person name="Gill S.R."/>
            <person name="Fouts D.E."/>
            <person name="Archer G.L."/>
            <person name="Mongodin E.F."/>
            <person name="DeBoy R.T."/>
            <person name="Ravel J."/>
            <person name="Paulsen I.T."/>
            <person name="Kolonay J.F."/>
            <person name="Brinkac L.M."/>
            <person name="Beanan M.J."/>
            <person name="Dodson R.J."/>
            <person name="Daugherty S.C."/>
            <person name="Madupu R."/>
            <person name="Angiuoli S.V."/>
            <person name="Durkin A.S."/>
            <person name="Haft D.H."/>
            <person name="Vamathevan J.J."/>
            <person name="Khouri H."/>
            <person name="Utterback T.R."/>
            <person name="Lee C."/>
            <person name="Dimitrov G."/>
            <person name="Jiang L."/>
            <person name="Qin H."/>
            <person name="Weidman J."/>
            <person name="Tran K."/>
            <person name="Kang K.H."/>
            <person name="Hance I.R."/>
            <person name="Nelson K.E."/>
            <person name="Fraser C.M."/>
        </authorList>
    </citation>
    <scope>NUCLEOTIDE SEQUENCE [LARGE SCALE GENOMIC DNA]</scope>
    <source>
        <strain>ATCC 35984 / DSM 28319 / BCRC 17069 / CCUG 31568 / BM 3577 / RP62A</strain>
    </source>
</reference>
<gene>
    <name type="primary">sle1</name>
    <name type="synonym">aaa</name>
    <name type="ordered locus">SERP0100</name>
</gene>
<keyword id="KW-0929">Antimicrobial</keyword>
<keyword id="KW-0081">Bacteriolytic enzyme</keyword>
<keyword id="KW-0131">Cell cycle</keyword>
<keyword id="KW-0132">Cell division</keyword>
<keyword id="KW-0961">Cell wall biogenesis/degradation</keyword>
<keyword id="KW-0378">Hydrolase</keyword>
<keyword id="KW-1185">Reference proteome</keyword>
<keyword id="KW-0677">Repeat</keyword>
<keyword id="KW-0964">Secreted</keyword>
<keyword id="KW-0717">Septation</keyword>
<keyword id="KW-0732">Signal</keyword>
<keyword id="KW-0843">Virulence</keyword>